<gene>
    <name evidence="1" type="primary">dtd</name>
    <name type="ordered locus">LAF_0812</name>
</gene>
<feature type="chain" id="PRO_1000127547" description="D-aminoacyl-tRNA deacylase">
    <location>
        <begin position="1"/>
        <end position="145"/>
    </location>
</feature>
<feature type="short sequence motif" description="Gly-cisPro motif, important for rejection of L-amino acids" evidence="1">
    <location>
        <begin position="137"/>
        <end position="138"/>
    </location>
</feature>
<protein>
    <recommendedName>
        <fullName evidence="1">D-aminoacyl-tRNA deacylase</fullName>
        <shortName evidence="1">DTD</shortName>
        <ecNumber evidence="1">3.1.1.96</ecNumber>
    </recommendedName>
    <alternativeName>
        <fullName evidence="1">Gly-tRNA(Ala) deacylase</fullName>
    </alternativeName>
</protein>
<evidence type="ECO:0000255" key="1">
    <source>
        <dbReference type="HAMAP-Rule" id="MF_00518"/>
    </source>
</evidence>
<keyword id="KW-0963">Cytoplasm</keyword>
<keyword id="KW-0378">Hydrolase</keyword>
<keyword id="KW-1185">Reference proteome</keyword>
<keyword id="KW-0694">RNA-binding</keyword>
<keyword id="KW-0820">tRNA-binding</keyword>
<organism>
    <name type="scientific">Limosilactobacillus fermentum (strain NBRC 3956 / LMG 18251)</name>
    <name type="common">Lactobacillus fermentum</name>
    <dbReference type="NCBI Taxonomy" id="334390"/>
    <lineage>
        <taxon>Bacteria</taxon>
        <taxon>Bacillati</taxon>
        <taxon>Bacillota</taxon>
        <taxon>Bacilli</taxon>
        <taxon>Lactobacillales</taxon>
        <taxon>Lactobacillaceae</taxon>
        <taxon>Limosilactobacillus</taxon>
    </lineage>
</organism>
<sequence>MRVVLQRVKEASVTIEGQVVGQIGQGYLLLVGFGPDDTEETLDYMVHKITNLRVFESEPGKMNLGLKDVDGAILSVSQFTLYADVKHGNRPGFSNAAKPSLAEPLYQRFNEKLAATGIPVATGQFGADMQVALVNDGPVTIWYEK</sequence>
<comment type="function">
    <text evidence="1">An aminoacyl-tRNA editing enzyme that deacylates mischarged D-aminoacyl-tRNAs. Also deacylates mischarged glycyl-tRNA(Ala), protecting cells against glycine mischarging by AlaRS. Acts via tRNA-based rather than protein-based catalysis; rejects L-amino acids rather than detecting D-amino acids in the active site. By recycling D-aminoacyl-tRNA to D-amino acids and free tRNA molecules, this enzyme counteracts the toxicity associated with the formation of D-aminoacyl-tRNA entities in vivo and helps enforce protein L-homochirality.</text>
</comment>
<comment type="catalytic activity">
    <reaction evidence="1">
        <text>glycyl-tRNA(Ala) + H2O = tRNA(Ala) + glycine + H(+)</text>
        <dbReference type="Rhea" id="RHEA:53744"/>
        <dbReference type="Rhea" id="RHEA-COMP:9657"/>
        <dbReference type="Rhea" id="RHEA-COMP:13640"/>
        <dbReference type="ChEBI" id="CHEBI:15377"/>
        <dbReference type="ChEBI" id="CHEBI:15378"/>
        <dbReference type="ChEBI" id="CHEBI:57305"/>
        <dbReference type="ChEBI" id="CHEBI:78442"/>
        <dbReference type="ChEBI" id="CHEBI:78522"/>
        <dbReference type="EC" id="3.1.1.96"/>
    </reaction>
</comment>
<comment type="catalytic activity">
    <reaction evidence="1">
        <text>a D-aminoacyl-tRNA + H2O = a tRNA + a D-alpha-amino acid + H(+)</text>
        <dbReference type="Rhea" id="RHEA:13953"/>
        <dbReference type="Rhea" id="RHEA-COMP:10123"/>
        <dbReference type="Rhea" id="RHEA-COMP:10124"/>
        <dbReference type="ChEBI" id="CHEBI:15377"/>
        <dbReference type="ChEBI" id="CHEBI:15378"/>
        <dbReference type="ChEBI" id="CHEBI:59871"/>
        <dbReference type="ChEBI" id="CHEBI:78442"/>
        <dbReference type="ChEBI" id="CHEBI:79333"/>
        <dbReference type="EC" id="3.1.1.96"/>
    </reaction>
</comment>
<comment type="subunit">
    <text evidence="1">Homodimer.</text>
</comment>
<comment type="subcellular location">
    <subcellularLocation>
        <location evidence="1">Cytoplasm</location>
    </subcellularLocation>
</comment>
<comment type="domain">
    <text evidence="1">A Gly-cisPro motif from one monomer fits into the active site of the other monomer to allow specific chiral rejection of L-amino acids.</text>
</comment>
<comment type="similarity">
    <text evidence="1">Belongs to the DTD family.</text>
</comment>
<proteinExistence type="inferred from homology"/>
<accession>B2GBW6</accession>
<name>DTD_LIMF3</name>
<dbReference type="EC" id="3.1.1.96" evidence="1"/>
<dbReference type="EMBL" id="AP008937">
    <property type="protein sequence ID" value="BAG27148.1"/>
    <property type="molecule type" value="Genomic_DNA"/>
</dbReference>
<dbReference type="RefSeq" id="WP_003681786.1">
    <property type="nucleotide sequence ID" value="NC_010610.1"/>
</dbReference>
<dbReference type="SMR" id="B2GBW6"/>
<dbReference type="GeneID" id="83714805"/>
<dbReference type="KEGG" id="lfe:LAF_0812"/>
<dbReference type="eggNOG" id="COG1490">
    <property type="taxonomic scope" value="Bacteria"/>
</dbReference>
<dbReference type="HOGENOM" id="CLU_076901_1_0_9"/>
<dbReference type="Proteomes" id="UP000001697">
    <property type="component" value="Chromosome"/>
</dbReference>
<dbReference type="GO" id="GO:0005737">
    <property type="term" value="C:cytoplasm"/>
    <property type="evidence" value="ECO:0007669"/>
    <property type="project" value="UniProtKB-SubCell"/>
</dbReference>
<dbReference type="GO" id="GO:0051500">
    <property type="term" value="F:D-tyrosyl-tRNA(Tyr) deacylase activity"/>
    <property type="evidence" value="ECO:0007669"/>
    <property type="project" value="TreeGrafter"/>
</dbReference>
<dbReference type="GO" id="GO:0106026">
    <property type="term" value="F:Gly-tRNA(Ala) deacylase activity"/>
    <property type="evidence" value="ECO:0007669"/>
    <property type="project" value="UniProtKB-UniRule"/>
</dbReference>
<dbReference type="GO" id="GO:0043908">
    <property type="term" value="F:Ser(Gly)-tRNA(Ala) hydrolase activity"/>
    <property type="evidence" value="ECO:0007669"/>
    <property type="project" value="UniProtKB-UniRule"/>
</dbReference>
<dbReference type="GO" id="GO:0000049">
    <property type="term" value="F:tRNA binding"/>
    <property type="evidence" value="ECO:0007669"/>
    <property type="project" value="UniProtKB-UniRule"/>
</dbReference>
<dbReference type="GO" id="GO:0019478">
    <property type="term" value="P:D-amino acid catabolic process"/>
    <property type="evidence" value="ECO:0007669"/>
    <property type="project" value="UniProtKB-UniRule"/>
</dbReference>
<dbReference type="CDD" id="cd00563">
    <property type="entry name" value="Dtyr_deacylase"/>
    <property type="match status" value="1"/>
</dbReference>
<dbReference type="FunFam" id="3.50.80.10:FF:000001">
    <property type="entry name" value="D-aminoacyl-tRNA deacylase"/>
    <property type="match status" value="1"/>
</dbReference>
<dbReference type="Gene3D" id="3.50.80.10">
    <property type="entry name" value="D-tyrosyl-tRNA(Tyr) deacylase"/>
    <property type="match status" value="1"/>
</dbReference>
<dbReference type="HAMAP" id="MF_00518">
    <property type="entry name" value="Deacylase_Dtd"/>
    <property type="match status" value="1"/>
</dbReference>
<dbReference type="InterPro" id="IPR003732">
    <property type="entry name" value="Daa-tRNA_deacyls_DTD"/>
</dbReference>
<dbReference type="InterPro" id="IPR023509">
    <property type="entry name" value="DTD-like_sf"/>
</dbReference>
<dbReference type="NCBIfam" id="TIGR00256">
    <property type="entry name" value="D-aminoacyl-tRNA deacylase"/>
    <property type="match status" value="1"/>
</dbReference>
<dbReference type="PANTHER" id="PTHR10472:SF5">
    <property type="entry name" value="D-AMINOACYL-TRNA DEACYLASE 1"/>
    <property type="match status" value="1"/>
</dbReference>
<dbReference type="PANTHER" id="PTHR10472">
    <property type="entry name" value="D-TYROSYL-TRNA TYR DEACYLASE"/>
    <property type="match status" value="1"/>
</dbReference>
<dbReference type="Pfam" id="PF02580">
    <property type="entry name" value="Tyr_Deacylase"/>
    <property type="match status" value="1"/>
</dbReference>
<dbReference type="SUPFAM" id="SSF69500">
    <property type="entry name" value="DTD-like"/>
    <property type="match status" value="1"/>
</dbReference>
<reference key="1">
    <citation type="journal article" date="2008" name="DNA Res.">
        <title>Comparative genome analysis of Lactobacillus reuteri and Lactobacillus fermentum reveal a genomic island for reuterin and cobalamin production.</title>
        <authorList>
            <person name="Morita H."/>
            <person name="Toh H."/>
            <person name="Fukuda S."/>
            <person name="Horikawa H."/>
            <person name="Oshima K."/>
            <person name="Suzuki T."/>
            <person name="Murakami M."/>
            <person name="Hisamatsu S."/>
            <person name="Kato Y."/>
            <person name="Takizawa T."/>
            <person name="Fukuoka H."/>
            <person name="Yoshimura T."/>
            <person name="Itoh K."/>
            <person name="O'Sullivan D.J."/>
            <person name="McKay L.L."/>
            <person name="Ohno H."/>
            <person name="Kikuchi J."/>
            <person name="Masaoka T."/>
            <person name="Hattori M."/>
        </authorList>
    </citation>
    <scope>NUCLEOTIDE SEQUENCE [LARGE SCALE GENOMIC DNA]</scope>
    <source>
        <strain>NBRC 3956 / LMG 18251</strain>
    </source>
</reference>